<sequence>MARIAGVNIPDNKHTVISLTYIYGVGRTTAQSICAATGVNPAAKIKDLSDEQIDQLRNEVAKITTEGDLRREINMNIKRLMDLGCYRGLRHRRGLPVRGQRTKTNARTRKGPRKPIRK</sequence>
<protein>
    <recommendedName>
        <fullName evidence="1">Small ribosomal subunit protein uS13</fullName>
    </recommendedName>
    <alternativeName>
        <fullName evidence="3">30S ribosomal protein S13</fullName>
    </alternativeName>
</protein>
<accession>Q9HWF7</accession>
<organism>
    <name type="scientific">Pseudomonas aeruginosa (strain ATCC 15692 / DSM 22644 / CIP 104116 / JCM 14847 / LMG 12228 / 1C / PRS 101 / PAO1)</name>
    <dbReference type="NCBI Taxonomy" id="208964"/>
    <lineage>
        <taxon>Bacteria</taxon>
        <taxon>Pseudomonadati</taxon>
        <taxon>Pseudomonadota</taxon>
        <taxon>Gammaproteobacteria</taxon>
        <taxon>Pseudomonadales</taxon>
        <taxon>Pseudomonadaceae</taxon>
        <taxon>Pseudomonas</taxon>
    </lineage>
</organism>
<feature type="chain" id="PRO_0000132121" description="Small ribosomal subunit protein uS13">
    <location>
        <begin position="1"/>
        <end position="118"/>
    </location>
</feature>
<feature type="region of interest" description="Disordered" evidence="2">
    <location>
        <begin position="94"/>
        <end position="118"/>
    </location>
</feature>
<gene>
    <name evidence="1" type="primary">rpsM</name>
    <name type="ordered locus">PA4241</name>
</gene>
<evidence type="ECO:0000255" key="1">
    <source>
        <dbReference type="HAMAP-Rule" id="MF_01315"/>
    </source>
</evidence>
<evidence type="ECO:0000256" key="2">
    <source>
        <dbReference type="SAM" id="MobiDB-lite"/>
    </source>
</evidence>
<evidence type="ECO:0000305" key="3"/>
<dbReference type="EMBL" id="AE004091">
    <property type="protein sequence ID" value="AAG07629.1"/>
    <property type="molecule type" value="Genomic_DNA"/>
</dbReference>
<dbReference type="PIR" id="G83113">
    <property type="entry name" value="G83113"/>
</dbReference>
<dbReference type="RefSeq" id="NP_252931.1">
    <property type="nucleotide sequence ID" value="NC_002516.2"/>
</dbReference>
<dbReference type="RefSeq" id="WP_003093692.1">
    <property type="nucleotide sequence ID" value="NZ_QZGE01000028.1"/>
</dbReference>
<dbReference type="PDB" id="7UNR">
    <property type="method" value="EM"/>
    <property type="resolution" value="2.90 A"/>
    <property type="chains" value="m=1-118"/>
</dbReference>
<dbReference type="PDB" id="7UNU">
    <property type="method" value="EM"/>
    <property type="resolution" value="2.90 A"/>
    <property type="chains" value="m=1-118"/>
</dbReference>
<dbReference type="PDB" id="7UNV">
    <property type="method" value="EM"/>
    <property type="resolution" value="2.70 A"/>
    <property type="chains" value="m=1-118"/>
</dbReference>
<dbReference type="PDB" id="7UNW">
    <property type="method" value="EM"/>
    <property type="resolution" value="2.60 A"/>
    <property type="chains" value="m=1-118"/>
</dbReference>
<dbReference type="PDB" id="8CD1">
    <property type="method" value="EM"/>
    <property type="resolution" value="3.00 A"/>
    <property type="chains" value="m=1-118"/>
</dbReference>
<dbReference type="PDB" id="8RWG">
    <property type="method" value="EM"/>
    <property type="resolution" value="2.46 A"/>
    <property type="chains" value="l=1-118"/>
</dbReference>
<dbReference type="PDBsum" id="7UNR"/>
<dbReference type="PDBsum" id="7UNU"/>
<dbReference type="PDBsum" id="7UNV"/>
<dbReference type="PDBsum" id="7UNW"/>
<dbReference type="PDBsum" id="8CD1"/>
<dbReference type="PDBsum" id="8RWG"/>
<dbReference type="EMDB" id="EMD-16566"/>
<dbReference type="EMDB" id="EMD-19547"/>
<dbReference type="EMDB" id="EMD-26630"/>
<dbReference type="EMDB" id="EMD-26633"/>
<dbReference type="EMDB" id="EMD-26634"/>
<dbReference type="EMDB" id="EMD-26635"/>
<dbReference type="SMR" id="Q9HWF7"/>
<dbReference type="FunCoup" id="Q9HWF7">
    <property type="interactions" value="853"/>
</dbReference>
<dbReference type="STRING" id="208964.PA4241"/>
<dbReference type="PaxDb" id="208964-PA4241"/>
<dbReference type="DNASU" id="881818"/>
<dbReference type="GeneID" id="881818"/>
<dbReference type="KEGG" id="pae:PA4241"/>
<dbReference type="PATRIC" id="fig|208964.12.peg.4442"/>
<dbReference type="PseudoCAP" id="PA4241"/>
<dbReference type="HOGENOM" id="CLU_103849_1_2_6"/>
<dbReference type="InParanoid" id="Q9HWF7"/>
<dbReference type="OrthoDB" id="9803610at2"/>
<dbReference type="PhylomeDB" id="Q9HWF7"/>
<dbReference type="BioCyc" id="PAER208964:G1FZ6-4314-MONOMER"/>
<dbReference type="PRO" id="PR:Q9HWF7"/>
<dbReference type="Proteomes" id="UP000002438">
    <property type="component" value="Chromosome"/>
</dbReference>
<dbReference type="GO" id="GO:0005829">
    <property type="term" value="C:cytosol"/>
    <property type="evidence" value="ECO:0000318"/>
    <property type="project" value="GO_Central"/>
</dbReference>
<dbReference type="GO" id="GO:0015935">
    <property type="term" value="C:small ribosomal subunit"/>
    <property type="evidence" value="ECO:0000318"/>
    <property type="project" value="GO_Central"/>
</dbReference>
<dbReference type="GO" id="GO:0019843">
    <property type="term" value="F:rRNA binding"/>
    <property type="evidence" value="ECO:0007669"/>
    <property type="project" value="UniProtKB-UniRule"/>
</dbReference>
<dbReference type="GO" id="GO:0003735">
    <property type="term" value="F:structural constituent of ribosome"/>
    <property type="evidence" value="ECO:0007669"/>
    <property type="project" value="InterPro"/>
</dbReference>
<dbReference type="GO" id="GO:0000049">
    <property type="term" value="F:tRNA binding"/>
    <property type="evidence" value="ECO:0007669"/>
    <property type="project" value="UniProtKB-UniRule"/>
</dbReference>
<dbReference type="GO" id="GO:0006412">
    <property type="term" value="P:translation"/>
    <property type="evidence" value="ECO:0007669"/>
    <property type="project" value="UniProtKB-UniRule"/>
</dbReference>
<dbReference type="FunFam" id="1.10.8.50:FF:000001">
    <property type="entry name" value="30S ribosomal protein S13"/>
    <property type="match status" value="1"/>
</dbReference>
<dbReference type="FunFam" id="4.10.910.10:FF:000001">
    <property type="entry name" value="30S ribosomal protein S13"/>
    <property type="match status" value="1"/>
</dbReference>
<dbReference type="Gene3D" id="1.10.8.50">
    <property type="match status" value="1"/>
</dbReference>
<dbReference type="Gene3D" id="4.10.910.10">
    <property type="entry name" value="30s ribosomal protein s13, domain 2"/>
    <property type="match status" value="1"/>
</dbReference>
<dbReference type="HAMAP" id="MF_01315">
    <property type="entry name" value="Ribosomal_uS13"/>
    <property type="match status" value="1"/>
</dbReference>
<dbReference type="InterPro" id="IPR027437">
    <property type="entry name" value="Rbsml_uS13_C"/>
</dbReference>
<dbReference type="InterPro" id="IPR001892">
    <property type="entry name" value="Ribosomal_uS13"/>
</dbReference>
<dbReference type="InterPro" id="IPR010979">
    <property type="entry name" value="Ribosomal_uS13-like_H2TH"/>
</dbReference>
<dbReference type="InterPro" id="IPR019980">
    <property type="entry name" value="Ribosomal_uS13_bac-type"/>
</dbReference>
<dbReference type="InterPro" id="IPR018269">
    <property type="entry name" value="Ribosomal_uS13_CS"/>
</dbReference>
<dbReference type="NCBIfam" id="TIGR03631">
    <property type="entry name" value="uS13_bact"/>
    <property type="match status" value="1"/>
</dbReference>
<dbReference type="PANTHER" id="PTHR10871">
    <property type="entry name" value="30S RIBOSOMAL PROTEIN S13/40S RIBOSOMAL PROTEIN S18"/>
    <property type="match status" value="1"/>
</dbReference>
<dbReference type="PANTHER" id="PTHR10871:SF1">
    <property type="entry name" value="SMALL RIBOSOMAL SUBUNIT PROTEIN US13M"/>
    <property type="match status" value="1"/>
</dbReference>
<dbReference type="Pfam" id="PF00416">
    <property type="entry name" value="Ribosomal_S13"/>
    <property type="match status" value="1"/>
</dbReference>
<dbReference type="PIRSF" id="PIRSF002134">
    <property type="entry name" value="Ribosomal_S13"/>
    <property type="match status" value="1"/>
</dbReference>
<dbReference type="SUPFAM" id="SSF46946">
    <property type="entry name" value="S13-like H2TH domain"/>
    <property type="match status" value="1"/>
</dbReference>
<dbReference type="PROSITE" id="PS00646">
    <property type="entry name" value="RIBOSOMAL_S13_1"/>
    <property type="match status" value="1"/>
</dbReference>
<dbReference type="PROSITE" id="PS50159">
    <property type="entry name" value="RIBOSOMAL_S13_2"/>
    <property type="match status" value="1"/>
</dbReference>
<name>RS13_PSEAE</name>
<keyword id="KW-0002">3D-structure</keyword>
<keyword id="KW-1185">Reference proteome</keyword>
<keyword id="KW-0687">Ribonucleoprotein</keyword>
<keyword id="KW-0689">Ribosomal protein</keyword>
<keyword id="KW-0694">RNA-binding</keyword>
<keyword id="KW-0699">rRNA-binding</keyword>
<keyword id="KW-0820">tRNA-binding</keyword>
<comment type="function">
    <text evidence="1">Located at the top of the head of the 30S subunit, it contacts several helices of the 16S rRNA. In the 70S ribosome it contacts the 23S rRNA (bridge B1a) and protein L5 of the 50S subunit (bridge B1b), connecting the 2 subunits; these bridges are implicated in subunit movement. Contacts the tRNAs in the A and P-sites.</text>
</comment>
<comment type="subunit">
    <text evidence="1">Part of the 30S ribosomal subunit. Forms a loose heterodimer with protein S19. Forms two bridges to the 50S subunit in the 70S ribosome.</text>
</comment>
<comment type="similarity">
    <text evidence="1">Belongs to the universal ribosomal protein uS13 family.</text>
</comment>
<reference key="1">
    <citation type="journal article" date="2000" name="Nature">
        <title>Complete genome sequence of Pseudomonas aeruginosa PAO1, an opportunistic pathogen.</title>
        <authorList>
            <person name="Stover C.K."/>
            <person name="Pham X.-Q.T."/>
            <person name="Erwin A.L."/>
            <person name="Mizoguchi S.D."/>
            <person name="Warrener P."/>
            <person name="Hickey M.J."/>
            <person name="Brinkman F.S.L."/>
            <person name="Hufnagle W.O."/>
            <person name="Kowalik D.J."/>
            <person name="Lagrou M."/>
            <person name="Garber R.L."/>
            <person name="Goltry L."/>
            <person name="Tolentino E."/>
            <person name="Westbrock-Wadman S."/>
            <person name="Yuan Y."/>
            <person name="Brody L.L."/>
            <person name="Coulter S.N."/>
            <person name="Folger K.R."/>
            <person name="Kas A."/>
            <person name="Larbig K."/>
            <person name="Lim R.M."/>
            <person name="Smith K.A."/>
            <person name="Spencer D.H."/>
            <person name="Wong G.K.-S."/>
            <person name="Wu Z."/>
            <person name="Paulsen I.T."/>
            <person name="Reizer J."/>
            <person name="Saier M.H. Jr."/>
            <person name="Hancock R.E.W."/>
            <person name="Lory S."/>
            <person name="Olson M.V."/>
        </authorList>
    </citation>
    <scope>NUCLEOTIDE SEQUENCE [LARGE SCALE GENOMIC DNA]</scope>
    <source>
        <strain>ATCC 15692 / DSM 22644 / CIP 104116 / JCM 14847 / LMG 12228 / 1C / PRS 101 / PAO1</strain>
    </source>
</reference>
<proteinExistence type="evidence at protein level"/>